<keyword id="KW-0687">Ribonucleoprotein</keyword>
<keyword id="KW-0689">Ribosomal protein</keyword>
<keyword id="KW-0694">RNA-binding</keyword>
<keyword id="KW-0699">rRNA-binding</keyword>
<comment type="function">
    <text evidence="1">Binds to 23S rRNA. Forms part of two intersubunit bridges in the 70S ribosome.</text>
</comment>
<comment type="subunit">
    <text evidence="1">Part of the 50S ribosomal subunit. Forms a cluster with proteins L3 and L19. In the 70S ribosome, L14 and L19 interact and together make contacts with the 16S rRNA in bridges B5 and B8.</text>
</comment>
<comment type="similarity">
    <text evidence="1">Belongs to the universal ribosomal protein uL14 family.</text>
</comment>
<proteinExistence type="inferred from homology"/>
<sequence length="122" mass="13349">MIQQESRLKVADNTGAKEILCIRVLGGSSRRYAGIGDVIVATVKDAIPGGNVKRGDVVKAVVVRTAKERRRADGSYIKFDENAAVIIKNDNDPRGTRIFGPVGRELREKKFMKIVSLAPEVL</sequence>
<protein>
    <recommendedName>
        <fullName evidence="1">Large ribosomal subunit protein uL14</fullName>
    </recommendedName>
    <alternativeName>
        <fullName evidence="2">50S ribosomal protein L14</fullName>
    </alternativeName>
</protein>
<evidence type="ECO:0000255" key="1">
    <source>
        <dbReference type="HAMAP-Rule" id="MF_01367"/>
    </source>
</evidence>
<evidence type="ECO:0000305" key="2"/>
<reference key="1">
    <citation type="submission" date="2006-12" db="EMBL/GenBank/DDBJ databases">
        <title>Complete sequence of Mycobacterium vanbaalenii PYR-1.</title>
        <authorList>
            <consortium name="US DOE Joint Genome Institute"/>
            <person name="Copeland A."/>
            <person name="Lucas S."/>
            <person name="Lapidus A."/>
            <person name="Barry K."/>
            <person name="Detter J.C."/>
            <person name="Glavina del Rio T."/>
            <person name="Hammon N."/>
            <person name="Israni S."/>
            <person name="Dalin E."/>
            <person name="Tice H."/>
            <person name="Pitluck S."/>
            <person name="Singan V."/>
            <person name="Schmutz J."/>
            <person name="Larimer F."/>
            <person name="Land M."/>
            <person name="Hauser L."/>
            <person name="Kyrpides N."/>
            <person name="Anderson I.J."/>
            <person name="Miller C."/>
            <person name="Richardson P."/>
        </authorList>
    </citation>
    <scope>NUCLEOTIDE SEQUENCE [LARGE SCALE GENOMIC DNA]</scope>
    <source>
        <strain>DSM 7251 / JCM 13017 / BCRC 16820 / KCTC 9966 / NRRL B-24157 / PYR-1</strain>
    </source>
</reference>
<name>RL14_MYCVP</name>
<organism>
    <name type="scientific">Mycolicibacterium vanbaalenii (strain DSM 7251 / JCM 13017 / BCRC 16820 / KCTC 9966 / NRRL B-24157 / PYR-1)</name>
    <name type="common">Mycobacterium vanbaalenii</name>
    <dbReference type="NCBI Taxonomy" id="350058"/>
    <lineage>
        <taxon>Bacteria</taxon>
        <taxon>Bacillati</taxon>
        <taxon>Actinomycetota</taxon>
        <taxon>Actinomycetes</taxon>
        <taxon>Mycobacteriales</taxon>
        <taxon>Mycobacteriaceae</taxon>
        <taxon>Mycolicibacterium</taxon>
    </lineage>
</organism>
<dbReference type="EMBL" id="CP000511">
    <property type="protein sequence ID" value="ABM12166.1"/>
    <property type="molecule type" value="Genomic_DNA"/>
</dbReference>
<dbReference type="RefSeq" id="WP_011778596.1">
    <property type="nucleotide sequence ID" value="NZ_JACKSD010000069.1"/>
</dbReference>
<dbReference type="SMR" id="A1T4R6"/>
<dbReference type="STRING" id="350058.Mvan_1332"/>
<dbReference type="KEGG" id="mva:Mvan_1332"/>
<dbReference type="eggNOG" id="COG0093">
    <property type="taxonomic scope" value="Bacteria"/>
</dbReference>
<dbReference type="HOGENOM" id="CLU_095071_2_1_11"/>
<dbReference type="Proteomes" id="UP000009159">
    <property type="component" value="Chromosome"/>
</dbReference>
<dbReference type="GO" id="GO:0022625">
    <property type="term" value="C:cytosolic large ribosomal subunit"/>
    <property type="evidence" value="ECO:0007669"/>
    <property type="project" value="TreeGrafter"/>
</dbReference>
<dbReference type="GO" id="GO:0070180">
    <property type="term" value="F:large ribosomal subunit rRNA binding"/>
    <property type="evidence" value="ECO:0007669"/>
    <property type="project" value="TreeGrafter"/>
</dbReference>
<dbReference type="GO" id="GO:0003735">
    <property type="term" value="F:structural constituent of ribosome"/>
    <property type="evidence" value="ECO:0007669"/>
    <property type="project" value="InterPro"/>
</dbReference>
<dbReference type="GO" id="GO:0006412">
    <property type="term" value="P:translation"/>
    <property type="evidence" value="ECO:0007669"/>
    <property type="project" value="UniProtKB-UniRule"/>
</dbReference>
<dbReference type="CDD" id="cd00337">
    <property type="entry name" value="Ribosomal_uL14"/>
    <property type="match status" value="1"/>
</dbReference>
<dbReference type="FunFam" id="2.40.150.20:FF:000001">
    <property type="entry name" value="50S ribosomal protein L14"/>
    <property type="match status" value="1"/>
</dbReference>
<dbReference type="Gene3D" id="2.40.150.20">
    <property type="entry name" value="Ribosomal protein L14"/>
    <property type="match status" value="1"/>
</dbReference>
<dbReference type="HAMAP" id="MF_01367">
    <property type="entry name" value="Ribosomal_uL14"/>
    <property type="match status" value="1"/>
</dbReference>
<dbReference type="InterPro" id="IPR000218">
    <property type="entry name" value="Ribosomal_uL14"/>
</dbReference>
<dbReference type="InterPro" id="IPR005745">
    <property type="entry name" value="Ribosomal_uL14_bac-type"/>
</dbReference>
<dbReference type="InterPro" id="IPR019972">
    <property type="entry name" value="Ribosomal_uL14_CS"/>
</dbReference>
<dbReference type="InterPro" id="IPR036853">
    <property type="entry name" value="Ribosomal_uL14_sf"/>
</dbReference>
<dbReference type="NCBIfam" id="TIGR01067">
    <property type="entry name" value="rplN_bact"/>
    <property type="match status" value="1"/>
</dbReference>
<dbReference type="PANTHER" id="PTHR11761">
    <property type="entry name" value="50S/60S RIBOSOMAL PROTEIN L14/L23"/>
    <property type="match status" value="1"/>
</dbReference>
<dbReference type="PANTHER" id="PTHR11761:SF3">
    <property type="entry name" value="LARGE RIBOSOMAL SUBUNIT PROTEIN UL14M"/>
    <property type="match status" value="1"/>
</dbReference>
<dbReference type="Pfam" id="PF00238">
    <property type="entry name" value="Ribosomal_L14"/>
    <property type="match status" value="1"/>
</dbReference>
<dbReference type="SMART" id="SM01374">
    <property type="entry name" value="Ribosomal_L14"/>
    <property type="match status" value="1"/>
</dbReference>
<dbReference type="SUPFAM" id="SSF50193">
    <property type="entry name" value="Ribosomal protein L14"/>
    <property type="match status" value="1"/>
</dbReference>
<dbReference type="PROSITE" id="PS00049">
    <property type="entry name" value="RIBOSOMAL_L14"/>
    <property type="match status" value="1"/>
</dbReference>
<accession>A1T4R6</accession>
<gene>
    <name evidence="1" type="primary">rplN</name>
    <name type="ordered locus">Mvan_1332</name>
</gene>
<feature type="chain" id="PRO_1000055647" description="Large ribosomal subunit protein uL14">
    <location>
        <begin position="1"/>
        <end position="122"/>
    </location>
</feature>